<protein>
    <recommendedName>
        <fullName evidence="21">Roquin-1</fullName>
        <shortName evidence="21">Roquin</shortName>
        <ecNumber evidence="1">2.3.2.27</ecNumber>
    </recommendedName>
    <alternativeName>
        <fullName evidence="20">Protein Sanroque</fullName>
    </alternativeName>
    <alternativeName>
        <fullName>RING finger and C3H zinc finger protein 1</fullName>
    </alternativeName>
    <alternativeName>
        <fullName>RING finger and CCCH-type zinc finger domain-containing protein 1</fullName>
    </alternativeName>
</protein>
<accession>Q4VGL6</accession>
<accession>B2RS13</accession>
<accession>Q69Z31</accession>
<comment type="function">
    <text evidence="1 5 6 7 8 10 11 12 13 14 15 16 17 18">Post-transcriptional repressor of mRNAs containing a conserved stem loop motif, called constitutive decay element (CDE), which is often located in the 3'-UTR, as in HMGXB3, ICOS, IER3, NFKBID, NFKBIZ, PPP1R10, TNF, TNFRSF4 and in many more mRNAs (PubMed:18172933, PubMed:23663784, PubMed:25026077). Cleaves translationally inactive mRNAs harboring a stem-loop (SL), often located in their 3'-UTRs, during the early phase of inflammation in a helicase UPF1-independent manner (PubMed:26000482). Binds to CDE and promotes mRNA deadenylation and degradation. This process does not involve miRNAs (PubMed:20412057, PubMed:20639877). In follicular helper T (Tfh) cells, represses of ICOS and TNFRSF4/Ox40 expression, thus preventing spontaneous Tfh cell differentiation, germinal center B-cell differentiation in the absence of immunization and autoimmunity. In resting or LPS-stimulated macrophages, controls inflammation by suppressing TNF expression. Also recognizes CDE in its own mRNA and in that of paralogous RC3H2, possibly leading to feedback loop regulation (PubMed:15917799, PubMed:23583642, PubMed:23583643). Inhibits cooperatively with ZC3H12A the differentiation of helper T cells Th17 in lungs. They repress target mRNA encoding the Th17 cell-promoting factors IL6, ICOS, REL, IRF4, NFKBID and NFKBIZ. The cooperation requires RNA-binding by RC3H1 and the nuclease activity of ZC3H12A (PubMed:25282160). Recognizes and binds mRNAs containing a hexaloop stem-loop motif, called alternative decay element (ADE) (PubMed:27010430). Together with ZC3H12A, destabilizes TNFRSF4/OX40 mRNA by binding to the conserved stem loop structure in its 3'UTR (PubMed:29244194). Able to interact with double-stranded RNA (By similarity). miRNA-binding protein that regulates microRNA homeostasis. Enhances DICER-mediated processing of pre-MIR146a but reduces mature MIR146a levels through an increase of 3' end uridylation. Both inhibits ICOS mRNA expression and they may act together to exert the suppression (PubMed:25697406). Acts as a ubiquitin E3 ligase. Pairs with E2 enzymes UBE2A, UBE2B, UBE2D2, UBE2F, UBE2G1, UBE2G2 and UBE2L3 and produces polyubiquitin chains. Shows the strongest activity when paired with UBE2N:UBE2V1 or UBE2N:UBE2V2 E2 complexes and generate both short and long polyubiquitin chains (By similarity).</text>
</comment>
<comment type="catalytic activity">
    <reaction evidence="1">
        <text>S-ubiquitinyl-[E2 ubiquitin-conjugating enzyme]-L-cysteine + [acceptor protein]-L-lysine = [E2 ubiquitin-conjugating enzyme]-L-cysteine + N(6)-ubiquitinyl-[acceptor protein]-L-lysine.</text>
        <dbReference type="EC" id="2.3.2.27"/>
    </reaction>
</comment>
<comment type="pathway">
    <text evidence="1">Protein modification; protein ubiquitination.</text>
</comment>
<comment type="subunit">
    <text evidence="8 11 12 15">Interacts with DDX6 and EDC4 (PubMed:20639877, PubMed:23583643). Interacts with CCR4-NOT deadenylase complex (PubMed:23663784). Interacts with RC3H1; the interaction is RNA independent (PubMed:25697406).</text>
</comment>
<comment type="interaction">
    <interactant intactId="EBI-2366263">
        <id>Q4VGL6</id>
    </interactant>
    <interactant intactId="EBI-528299">
        <id>Q8CJG0</id>
        <label>Ago2</label>
    </interactant>
    <organismsDiffer>false</organismsDiffer>
    <experiments>2</experiments>
</comment>
<comment type="interaction">
    <interactant intactId="EBI-2366263">
        <id>Q4VGL6</id>
    </interactant>
    <interactant intactId="EBI-2553526">
        <id>Q3UJB9</id>
        <label>Edc4</label>
    </interactant>
    <organismsDiffer>false</organismsDiffer>
    <experiments>3</experiments>
</comment>
<comment type="subcellular location">
    <subcellularLocation>
        <location evidence="5 7 8 10 16">Cytoplasm</location>
        <location evidence="5 7 8 10 16">P-body</location>
    </subcellularLocation>
    <subcellularLocation>
        <location evidence="16">Cytoplasmic granule</location>
    </subcellularLocation>
    <text evidence="8 16">During stress, such as that induced by arsenite treatment, localizes to cytosolic stress granules (PubMed:26000482). Localization to stress granules, but not to P-bodies, depends upon the RING-type zinc finger. ICOS repression may correlate with the localization to P-bodies, not to stress granules (PubMed:20639877).</text>
</comment>
<comment type="tissue specificity">
    <text evidence="5 11 18">Widely expressed, with highest levels in lymph node and thymus and slightly lesser amounts in brain, lung, and spleen (at protein level) (PubMed:23583643). Very weak expression in heart, muscle, and kidney (at protein level) (PubMed:23583643). Expressed in CD4(+) helper T-cells (at protein level) (PubMed:15917799, PubMed:23583643, PubMed:29244194).</text>
</comment>
<comment type="domain">
    <text evidence="1 7 10 12 13 17">The ROQ region is required for CDE RNA-binding (PubMed:23663784, PubMed:25026077, PubMed:27010430). Has 2 separate RNA-binding sites, one for CDE RNA and the other for dsRNA, both sites are important for mRNA decay (By similarity). ADE RNA-binding involves an extended binding surface on the ROQ region with a number of additional residues compared with the CDE RNA (PubMed:27010430). It may also be involved in localization to stress granules (PubMed:20412057, PubMed:23583642).</text>
</comment>
<comment type="domain">
    <text evidence="10">The RING-type zinc finger may be required for proper localization to stress granules, but not to P-bodies.</text>
</comment>
<comment type="domain">
    <text evidence="15">HEPN (higher eukaryotes and prokaryotes nucleotide-binding) are observed in both N- and C-terminal sides of ROQ domain with 3D structure even if they are poredcted on the basis of sequence.</text>
</comment>
<comment type="PTM">
    <text evidence="14">Proteolytically cleaved after Arg-510 and Arg-579 by MALT1 in activated CD4(+) T cells; cleavage at Arg-510 and Arg-579 is critical for promoting RC3H1 degradation in response to T-cell receptor (TCR) stimulation, and hence is necessary for prolonging the stability of a set of mRNAs controlling Th17 cell differentiation.</text>
</comment>
<comment type="disruption phenotype">
    <text evidence="9 11">Mutant animals are born at Mendelian ratio, but die within 6 hours after birth. They displayed a curly tail and malformations of the caudal spinal column. Lethality can be rescued by changing the genetic background from C57BL/6 to outbred CD1, which allows about 4% of the animals to survive to adulthood. These animals display enlarged spleens with a trend toward increased numbers of eosinophils and monocytic/macrophage populations, dramatic and selective expansion of CD8(+) effector-like T-cells. Splenic follicular organization is normal, and the numbers of CD4(+) T-cell subtypes and B-cells are not significantly altered. No spontaneous germinal center formation, autoantibody production, nor autoimmune tissue damage. Ablation of Rc3h1 gene in the T lineage leads to elevated ICOS levels and expansion of effector CD8(+) T-cells, but not autoimmunity (PubMed:21844204). Mice lacking both Rc3h1 and Rc3h2 genes in CD4(+) T-cells develop lymphadenopathy and splenomegaly with increased spleen weight and cellularity, already at young age. They show a prominent lung pathology with a progressive reduction in the alveolar space concomitant with inflammation. They show an average survival of 130 days. CD4(+) T-cells of these mutants show a pronounced bias toward Th17 differentiation (PubMed:21844204, PubMed:23583643).</text>
</comment>
<comment type="miscellaneous">
    <text evidence="15 22 23 24">Treatment of C57BL/6 males with ethylnitrosourea led to the identification of the sanroque mouse strain. The causative mutation in sanroque appears to be RC3H1 Arg-199. Homozygous sanroque mice develop high titers of autoantibodies and display excessive numbers of follicular helper T-cells and germinal centers with pattern of pathology consistent with lupus (PubMed:15917799). Sanroque mice reproducibly develop intestinal inflammation in the small intestine but not the colon. Extensive cytokine dysregulation resulting in both over-expression and under-expression of chemotactic cytokines occurs in the ileum, the region most prone to the development of inflammation in sanroque mice (PubMed:23451046). They show up-regulation of expression of at least 15 miRNAs in T cells (PubMed:25697406). The lack of compensation of RC3H1 defects by the RC3H2 paralog in sanroque mice may be due to the fact that the mutated protein may retain its scaffolding position within RNA granules, preventing RC3H2 to access mRNAs to be regulated (PubMed:23583642).</text>
</comment>
<comment type="sequence caution" evidence="21">
    <conflict type="erroneous initiation">
        <sequence resource="EMBL-CDS" id="BAD32613"/>
    </conflict>
    <text>Extended N-terminus.</text>
</comment>
<name>RC3H1_MOUSE</name>
<evidence type="ECO:0000250" key="1">
    <source>
        <dbReference type="UniProtKB" id="Q5TC82"/>
    </source>
</evidence>
<evidence type="ECO:0000255" key="2">
    <source>
        <dbReference type="PROSITE-ProRule" id="PRU00175"/>
    </source>
</evidence>
<evidence type="ECO:0000255" key="3">
    <source>
        <dbReference type="PROSITE-ProRule" id="PRU00723"/>
    </source>
</evidence>
<evidence type="ECO:0000256" key="4">
    <source>
        <dbReference type="SAM" id="MobiDB-lite"/>
    </source>
</evidence>
<evidence type="ECO:0000269" key="5">
    <source>
    </source>
</evidence>
<evidence type="ECO:0000269" key="6">
    <source>
    </source>
</evidence>
<evidence type="ECO:0000269" key="7">
    <source>
    </source>
</evidence>
<evidence type="ECO:0000269" key="8">
    <source>
    </source>
</evidence>
<evidence type="ECO:0000269" key="9">
    <source>
    </source>
</evidence>
<evidence type="ECO:0000269" key="10">
    <source>
    </source>
</evidence>
<evidence type="ECO:0000269" key="11">
    <source>
    </source>
</evidence>
<evidence type="ECO:0000269" key="12">
    <source>
    </source>
</evidence>
<evidence type="ECO:0000269" key="13">
    <source>
    </source>
</evidence>
<evidence type="ECO:0000269" key="14">
    <source>
    </source>
</evidence>
<evidence type="ECO:0000269" key="15">
    <source>
    </source>
</evidence>
<evidence type="ECO:0000269" key="16">
    <source>
    </source>
</evidence>
<evidence type="ECO:0000269" key="17">
    <source>
    </source>
</evidence>
<evidence type="ECO:0000269" key="18">
    <source>
    </source>
</evidence>
<evidence type="ECO:0000269" key="19">
    <source>
    </source>
</evidence>
<evidence type="ECO:0000303" key="20">
    <source>
    </source>
</evidence>
<evidence type="ECO:0000305" key="21"/>
<evidence type="ECO:0000305" key="22">
    <source>
    </source>
</evidence>
<evidence type="ECO:0000305" key="23">
    <source>
    </source>
</evidence>
<evidence type="ECO:0000305" key="24">
    <source>
    </source>
</evidence>
<evidence type="ECO:0000312" key="25">
    <source>
        <dbReference type="MGI" id="MGI:2685397"/>
    </source>
</evidence>
<evidence type="ECO:0007744" key="26">
    <source>
        <dbReference type="PDB" id="4QI0"/>
    </source>
</evidence>
<evidence type="ECO:0007744" key="27">
    <source>
        <dbReference type="PDB" id="4QI2"/>
    </source>
</evidence>
<evidence type="ECO:0007744" key="28">
    <source>
        <dbReference type="PDB" id="4TXA"/>
    </source>
</evidence>
<evidence type="ECO:0007744" key="29">
    <source>
        <dbReference type="PDB" id="5F5F"/>
    </source>
</evidence>
<evidence type="ECO:0007744" key="30">
    <source>
        <dbReference type="PDB" id="5F5H"/>
    </source>
</evidence>
<evidence type="ECO:0007744" key="31">
    <source>
    </source>
</evidence>
<evidence type="ECO:0007744" key="32">
    <source>
    </source>
</evidence>
<evidence type="ECO:0007829" key="33">
    <source>
        <dbReference type="PDB" id="4QI0"/>
    </source>
</evidence>
<evidence type="ECO:0007829" key="34">
    <source>
        <dbReference type="PDB" id="4TXA"/>
    </source>
</evidence>
<evidence type="ECO:0007829" key="35">
    <source>
        <dbReference type="PDB" id="6TQB"/>
    </source>
</evidence>
<sequence length="1130" mass="125378">MPVQAPQWTDFLSCPICTQTFDETIRKPISLGCGHTVCKMCLNKLHRKACPFDQTTINTDIELLPVNSALLQLVGAQIPEQQPITLCSGVEDTKHYEEAKKCVEELALYLKPLSSARGVGLNSTTQSVLSRPMQRKLVTLVHCQLVEEEGRIRAMRAARSLGERTVTELILQHQNPQQLSSNLWAAVRARGCQFLGPAMQEEALKLVLLALEDGSALSRKVLVLFVVQRLEPRFPQASKTSIGHVVQLLYRASCFKVTKRDEDSSLMQLKEEFRTYEALRREHDSQIVQIAMEAGLRIAPDQWSSLLYGDQSHKSHMQSIIDKLQTPASFAQSVQELTIALQRTGDPANLNRLRPHLELLANIDPSPDAPPPTWEQLENGLVAVRTVVHGLVDYIQNHSKKGADQQQPPQHSKYKTYMCRDMKQRGGCPRGASCTFAHSQEELEKFRKMNKRLVPRRPLSASLGQLNEVGLPSAPILSDESAVDLSNRKPPALPNGIASSGSTVTQLIPRGTDPSFDSSLKPVKLDHLSSSAPGSPPDLLESAPKSISALPVNPHPVPPRGPTDLPPMPVTKPIQMVPRGSQLYPAQQADVYYQDPRGSAPAFETAPYQQGMYYTPPPCVSRFVRPPPSAPEPGPPYLDHYSPYLQDRVINSQYGTQPQQYPPMYPAHYDGRRVYPAQSYTREEMFRESPIPIDIPSAAVPSYVPESRERYQQVEGYYPVAPHPAQIRPSYPRDPPYSRLPPPQPHPSLDELHRRRKEIMAQLEERKVISPPPFAPSPTLPPAFHPEEFLDEDLKVAGKYKANDYSQYSPWSCDTIGSYIGTKDAKPKDVVAAGSVEMMNVESKGTREQRLDLQRRAVETSDDDLIPFGDRPTVSRFGAISRTSKTLYQGAGPLQAIAPQGAPTKSINISDYSAYGAHGGWGDSPYSPHANIPPQGHFIEREKMSMAEVASHGKPLLSAEREQLRLELQQLNHQISQQTQLRGLEAVSNRLVLQREVNTLASQPQPPQLPPKWPGMISSEQLSLELHQVEREIGKRTRELSMENQCSVDMKSKLGTSKQAENGQPEPQNKIRTEDLTLTFSDVPNGSALTQENLSLLSNKTSSLNLSEDSEGGGDNNDSQRSGVVSNSAP</sequence>
<organism>
    <name type="scientific">Mus musculus</name>
    <name type="common">Mouse</name>
    <dbReference type="NCBI Taxonomy" id="10090"/>
    <lineage>
        <taxon>Eukaryota</taxon>
        <taxon>Metazoa</taxon>
        <taxon>Chordata</taxon>
        <taxon>Craniata</taxon>
        <taxon>Vertebrata</taxon>
        <taxon>Euteleostomi</taxon>
        <taxon>Mammalia</taxon>
        <taxon>Eutheria</taxon>
        <taxon>Euarchontoglires</taxon>
        <taxon>Glires</taxon>
        <taxon>Rodentia</taxon>
        <taxon>Myomorpha</taxon>
        <taxon>Muroidea</taxon>
        <taxon>Muridae</taxon>
        <taxon>Murinae</taxon>
        <taxon>Mus</taxon>
        <taxon>Mus</taxon>
    </lineage>
</organism>
<gene>
    <name evidence="25" type="primary">Rc3h1</name>
    <name type="synonym">Gm551</name>
    <name type="synonym">Kiaa2025</name>
</gene>
<reference key="1">
    <citation type="journal article" date="2005" name="Nature">
        <title>A RING-type ubiquitin ligase family member required to repress follicular helper T cells and autoimmunity.</title>
        <authorList>
            <person name="Vinuesa C.G."/>
            <person name="Cook M.C."/>
            <person name="Angelucci C."/>
            <person name="Athanasopoulos V."/>
            <person name="Rui L."/>
            <person name="Hill K.M."/>
            <person name="Yu D."/>
            <person name="Domaschenz H."/>
            <person name="Whittle B."/>
            <person name="Lambe T."/>
            <person name="Roberts I.S."/>
            <person name="Copley R.R."/>
            <person name="Bell J.I."/>
            <person name="Cornall R.J."/>
            <person name="Goodnow C.C."/>
        </authorList>
    </citation>
    <scope>NUCLEOTIDE SEQUENCE [MRNA]</scope>
    <scope>FUNCTION</scope>
    <scope>SUBCELLULAR LOCATION</scope>
    <scope>TISSUE SPECIFICITY</scope>
    <scope>MUTAGENESIS OF MET-199</scope>
    <scope>IDENTIFICATION OF ROQ REGION</scope>
    <scope>SANROQUE MOUSE</scope>
    <scope>MISCELLANEOUS</scope>
</reference>
<reference key="2">
    <citation type="journal article" date="2004" name="DNA Res.">
        <title>Prediction of the coding sequences of mouse homologues of KIAA gene: IV. The complete nucleotide sequences of 500 mouse KIAA-homologous cDNAs identified by screening of terminal sequences of cDNA clones randomly sampled from size-fractionated libraries.</title>
        <authorList>
            <person name="Okazaki N."/>
            <person name="Kikuno R."/>
            <person name="Ohara R."/>
            <person name="Inamoto S."/>
            <person name="Koseki H."/>
            <person name="Hiraoka S."/>
            <person name="Saga Y."/>
            <person name="Seino S."/>
            <person name="Nishimura M."/>
            <person name="Kaisho T."/>
            <person name="Hoshino K."/>
            <person name="Kitamura H."/>
            <person name="Nagase T."/>
            <person name="Ohara O."/>
            <person name="Koga H."/>
        </authorList>
    </citation>
    <scope>NUCLEOTIDE SEQUENCE [LARGE SCALE MRNA]</scope>
    <source>
        <tissue>Pancreatic islet</tissue>
    </source>
</reference>
<reference key="3">
    <citation type="journal article" date="2004" name="Genome Res.">
        <title>The status, quality, and expansion of the NIH full-length cDNA project: the Mammalian Gene Collection (MGC).</title>
        <authorList>
            <consortium name="The MGC Project Team"/>
        </authorList>
    </citation>
    <scope>NUCLEOTIDE SEQUENCE [LARGE SCALE MRNA]</scope>
    <source>
        <tissue>Brain</tissue>
    </source>
</reference>
<reference key="4">
    <citation type="journal article" date="2007" name="Nature">
        <title>Roquin represses autoimmunity by limiting inducible T-cell co-stimulator messenger RNA.</title>
        <authorList>
            <person name="Yu D."/>
            <person name="Tan A.H."/>
            <person name="Hu X."/>
            <person name="Athanasopoulos V."/>
            <person name="Simpson N."/>
            <person name="Silva D.G."/>
            <person name="Hutloff A."/>
            <person name="Giles K.M."/>
            <person name="Leedman P.J."/>
            <person name="Lam K.P."/>
            <person name="Goodnow C.C."/>
            <person name="Vinuesa C.G."/>
        </authorList>
    </citation>
    <scope>FUNCTION</scope>
</reference>
<reference key="5">
    <citation type="journal article" date="2008" name="Nature">
        <authorList>
            <person name="Yu D."/>
            <person name="Tan A.H."/>
            <person name="Hu X."/>
            <person name="Athanasopoulos V."/>
            <person name="Simpson N."/>
            <person name="Silva D.G."/>
            <person name="Hutloff A."/>
            <person name="Giles K.M."/>
            <person name="Leedman P.J."/>
            <person name="Lam K.P."/>
            <person name="Goodnow C.C."/>
            <person name="Vinuesa C.G."/>
        </authorList>
    </citation>
    <scope>ERRATUM OF PUBMED:18172933</scope>
</reference>
<reference key="6">
    <citation type="journal article" date="2007" name="Proc. Natl. Acad. Sci. U.S.A.">
        <title>Large-scale phosphorylation analysis of mouse liver.</title>
        <authorList>
            <person name="Villen J."/>
            <person name="Beausoleil S.A."/>
            <person name="Gerber S.A."/>
            <person name="Gygi S.P."/>
        </authorList>
    </citation>
    <scope>PHOSPHORYLATION [LARGE SCALE ANALYSIS] AT SER-1107 AND SER-1110</scope>
    <scope>IDENTIFICATION BY MASS SPECTROMETRY [LARGE SCALE ANALYSIS]</scope>
    <source>
        <tissue>Liver</tissue>
    </source>
</reference>
<reference key="7">
    <citation type="journal article" date="2010" name="Cell">
        <title>A tissue-specific atlas of mouse protein phosphorylation and expression.</title>
        <authorList>
            <person name="Huttlin E.L."/>
            <person name="Jedrychowski M.P."/>
            <person name="Elias J.E."/>
            <person name="Goswami T."/>
            <person name="Rad R."/>
            <person name="Beausoleil S.A."/>
            <person name="Villen J."/>
            <person name="Haas W."/>
            <person name="Sowa M.E."/>
            <person name="Gygi S.P."/>
        </authorList>
    </citation>
    <scope>PHOSPHORYLATION [LARGE SCALE ANALYSIS] AT SER-531; SER-535; SER-1107 AND SER-1110</scope>
    <scope>IDENTIFICATION BY MASS SPECTROMETRY [LARGE SCALE ANALYSIS]</scope>
    <source>
        <tissue>Brain</tissue>
        <tissue>Brown adipose tissue</tissue>
        <tissue>Kidney</tissue>
        <tissue>Lung</tissue>
        <tissue>Pancreas</tissue>
        <tissue>Spleen</tissue>
    </source>
</reference>
<reference key="8">
    <citation type="journal article" date="2010" name="FEBS J.">
        <title>The ROQUIN family of proteins localizes to stress granules via the ROQ domain and binds target mRNAs.</title>
        <authorList>
            <person name="Athanasopoulos V."/>
            <person name="Barker A."/>
            <person name="Yu D."/>
            <person name="Tan A.H."/>
            <person name="Srivastava M."/>
            <person name="Contreras N."/>
            <person name="Wang J."/>
            <person name="Lam K.P."/>
            <person name="Brown S.H."/>
            <person name="Goodnow C.C."/>
            <person name="Dixon N.E."/>
            <person name="Leedman P.J."/>
            <person name="Saint R."/>
            <person name="Vinuesa C.G."/>
        </authorList>
    </citation>
    <scope>FUNCTION</scope>
    <scope>RNA-BINDING</scope>
    <scope>SUBCELLULAR LOCATION</scope>
    <scope>MUTAGENESIS OF CYS-14 AND MET-199</scope>
</reference>
<reference key="9">
    <citation type="journal article" date="2010" name="Nat. Immunol.">
        <title>Roquin binds inducible costimulator mRNA and effectors of mRNA decay to induce microRNA-independent post-transcriptional repression.</title>
        <authorList>
            <person name="Glasmacher E."/>
            <person name="Hoefig K.P."/>
            <person name="Vogel K.U."/>
            <person name="Rath N."/>
            <person name="Du L."/>
            <person name="Wolf C."/>
            <person name="Kremmer E."/>
            <person name="Wang X."/>
            <person name="Heissmeyer V."/>
        </authorList>
    </citation>
    <scope>FUNCTION</scope>
    <scope>INTERACTION WITH DDX6 AND EDC4</scope>
    <scope>SUBCELLULAR LOCATION</scope>
</reference>
<reference key="10">
    <citation type="journal article" date="2011" name="J. Exp. Med.">
        <title>Loss of Roquin induces early death and immune deregulation but not autoimmunity.</title>
        <authorList>
            <person name="Bertossi A."/>
            <person name="Aichinger M."/>
            <person name="Sansonetti P."/>
            <person name="Lech M."/>
            <person name="Neff F."/>
            <person name="Pal M."/>
            <person name="Wunderlich F.T."/>
            <person name="Anders H.J."/>
            <person name="Klein L."/>
            <person name="Schmidt-Supprian M."/>
        </authorList>
    </citation>
    <scope>DISRUPTION PHENOTYPE</scope>
</reference>
<reference key="11">
    <citation type="journal article" date="2013" name="Cell">
        <title>Roquin promotes constitutive mRNA decay via a conserved class of stem-loop recognition motifs.</title>
        <authorList>
            <person name="Leppek K."/>
            <person name="Schott J."/>
            <person name="Reitter S."/>
            <person name="Poetz F."/>
            <person name="Hammond M.C."/>
            <person name="Stoecklin G."/>
        </authorList>
    </citation>
    <scope>FUNCTION</scope>
    <scope>INTERACTION WITH CCR4-NOT COMPLEX</scope>
    <scope>MUTAGENESIS OF CYS-419</scope>
</reference>
<reference key="12">
    <citation type="journal article" date="2013" name="Immunity">
        <title>Roquin paralogs 1 and 2 redundantly repress the Icos and Ox40 costimulator mRNAs and control follicular helper T cell differentiation.</title>
        <authorList>
            <person name="Vogel K.U."/>
            <person name="Edelmann S.L."/>
            <person name="Jeltsch K.M."/>
            <person name="Bertossi A."/>
            <person name="Heger K."/>
            <person name="Heinz G.A."/>
            <person name="Zoller J."/>
            <person name="Warth S.C."/>
            <person name="Hoefig K.P."/>
            <person name="Lohs C."/>
            <person name="Neff F."/>
            <person name="Kremmer E."/>
            <person name="Schick J."/>
            <person name="Repsilber D."/>
            <person name="Geerlof A."/>
            <person name="Blum H."/>
            <person name="Wurst W."/>
            <person name="Heikenwalder M."/>
            <person name="Schmidt-Supprian M."/>
            <person name="Heissmeyer V."/>
        </authorList>
    </citation>
    <scope>FUNCTION</scope>
    <scope>INTERACTION WITH EDC4</scope>
    <scope>DISRUPTION PHENOTYPE</scope>
    <scope>TISSUE SPECIFICITY</scope>
</reference>
<reference key="13">
    <citation type="journal article" date="2013" name="Immunity">
        <title>Roquin-2 shares functions with its paralog Roquin-1 in the repression of mRNAs controlling T follicular helper cells and systemic inflammation.</title>
        <authorList>
            <person name="Pratama A."/>
            <person name="Ramiscal R.R."/>
            <person name="Silva D.G."/>
            <person name="Das S.K."/>
            <person name="Athanasopoulos V."/>
            <person name="Fitch J."/>
            <person name="Botelho N.K."/>
            <person name="Chang P.P."/>
            <person name="Hu X."/>
            <person name="Hogan J.J."/>
            <person name="Mana P."/>
            <person name="Bernal D."/>
            <person name="Korner H."/>
            <person name="Yu D."/>
            <person name="Goodnow C.C."/>
            <person name="Cook M.C."/>
            <person name="Vinuesa C.G."/>
        </authorList>
    </citation>
    <scope>FUNCTION</scope>
    <scope>SUBCELLULAR LOCATION</scope>
    <scope>DOMAIN</scope>
    <scope>SANROQUE MOUSE</scope>
    <scope>MISCELLANEOUS</scope>
</reference>
<reference key="14">
    <citation type="journal article" date="2013" name="Immunol. Rev.">
        <title>Molecular control of Tfh-cell differentiation by Roquin family proteins.</title>
        <authorList>
            <person name="Heissmeyer V."/>
            <person name="Vogel K.U."/>
        </authorList>
    </citation>
    <scope>REVIEW</scope>
</reference>
<reference key="15">
    <citation type="journal article" date="2013" name="PLoS ONE">
        <title>Small intestine inflammation in Roquin-mutant and Roquin-deficient mice.</title>
        <authorList>
            <person name="Schaefer J.S."/>
            <person name="Montufar-Solis D."/>
            <person name="Nakra N."/>
            <person name="Vigneswaran N."/>
            <person name="Klein J.R."/>
        </authorList>
    </citation>
    <scope>INTESTINAL INFLAMMATION IN SANROQUE MOUSE</scope>
    <scope>MISCELLANEOUS</scope>
</reference>
<reference key="16">
    <citation type="journal article" date="2014" name="Nat. Immunol.">
        <title>Cleavage of roquin and regnase-1 by the paracaspase MALT1 releases their cooperatively repressed targets to promote T(H)17 differentiation.</title>
        <authorList>
            <person name="Jeltsch K.M."/>
            <person name="Hu D."/>
            <person name="Brenner S."/>
            <person name="Zoeller J."/>
            <person name="Heinz G.A."/>
            <person name="Nagel D."/>
            <person name="Vogel K.U."/>
            <person name="Rehage N."/>
            <person name="Warth S.C."/>
            <person name="Edelmann S.L."/>
            <person name="Gloury R."/>
            <person name="Martin N."/>
            <person name="Lohs C."/>
            <person name="Lech M."/>
            <person name="Stehklein J.E."/>
            <person name="Geerlof A."/>
            <person name="Kremmer E."/>
            <person name="Weber A."/>
            <person name="Anders H.J."/>
            <person name="Schmitz I."/>
            <person name="Schmidt-Supprian M."/>
            <person name="Fu M."/>
            <person name="Holtmann H."/>
            <person name="Krappmann D."/>
            <person name="Ruland J."/>
            <person name="Kallies A."/>
            <person name="Heikenwalder M."/>
            <person name="Heissmeyer V."/>
        </authorList>
    </citation>
    <scope>DISRUPTION PHENOTYPE</scope>
    <scope>PROTEOLYTIC CLEAVAGE</scope>
    <scope>MUTAGENESIS OF LYS-220; LYS-239; ARG-260; ARG-488; ARG-510; ARG-560 AND ARG-579</scope>
    <scope>FUNCTION</scope>
</reference>
<reference key="17">
    <citation type="journal article" date="2015" name="Cell">
        <title>Regnase-1 and Roquin regulate a common element in inflammatory mRNAs by spatiotemporally distinct mechanisms.</title>
        <authorList>
            <person name="Mino T."/>
            <person name="Murakawa Y."/>
            <person name="Fukao A."/>
            <person name="Vandenbon A."/>
            <person name="Wessels H.H."/>
            <person name="Ori D."/>
            <person name="Uehata T."/>
            <person name="Tartey S."/>
            <person name="Akira S."/>
            <person name="Suzuki Y."/>
            <person name="Vinuesa C.G."/>
            <person name="Ohler U."/>
            <person name="Standley D.M."/>
            <person name="Landthaler M."/>
            <person name="Fujiwara T."/>
            <person name="Takeuchi O."/>
        </authorList>
    </citation>
    <scope>FUNCTION</scope>
    <scope>SUBCELLULAR LOCATION</scope>
</reference>
<reference key="18">
    <citation type="journal article" date="2018" name="Eur. J. Immunol.">
        <title>Arid5a stabilizes OX40 mRNA in murine CD4+ T cells by recognizing a stem-loop structure in its 3'UTR.</title>
        <authorList>
            <person name="Hanieh H."/>
            <person name="Masuda K."/>
            <person name="Metwally H."/>
            <person name="Chalise J.P."/>
            <person name="Mohamed M."/>
            <person name="Nyati K.K."/>
            <person name="Standley D.M."/>
            <person name="Li S."/>
            <person name="Higa M."/>
            <person name="Zaman M.M."/>
            <person name="Kishimoto T."/>
        </authorList>
    </citation>
    <scope>FUNCTION</scope>
    <scope>TISSUE SPECIFICITY</scope>
</reference>
<reference key="19">
    <citation type="journal article" date="2019" name="Nat. Commun.">
        <title>A human immune dysregulation syndrome characterized by severe hyperinflammation with a homozygous nonsense Roquin-1 mutation.</title>
        <authorList>
            <person name="Tavernier S.J."/>
            <person name="Athanasopoulos V."/>
            <person name="Verloo P."/>
            <person name="Behrens G."/>
            <person name="Staal J."/>
            <person name="Bogaert D.J."/>
            <person name="Naesens L."/>
            <person name="De Bruyne M."/>
            <person name="Van Gassen S."/>
            <person name="Parthoens E."/>
            <person name="Ellyard J."/>
            <person name="Cappello J."/>
            <person name="Morris L.X."/>
            <person name="Van Gorp H."/>
            <person name="Van Isterdael G."/>
            <person name="Saeys Y."/>
            <person name="Lamkanfi M."/>
            <person name="Schelstraete P."/>
            <person name="Dehoorne J."/>
            <person name="Bordon V."/>
            <person name="Van Coster R."/>
            <person name="Lambrecht B.N."/>
            <person name="Menten B."/>
            <person name="Beyaert R."/>
            <person name="Vinuesa C.G."/>
            <person name="Heissmeyer V."/>
            <person name="Dullaers M."/>
            <person name="Haerynck F."/>
        </authorList>
    </citation>
    <scope>MUTAGENESIS OF MET-199 AND ARG-687</scope>
</reference>
<reference evidence="26 27" key="20">
    <citation type="journal article" date="2014" name="Nat. Struct. Mol. Biol.">
        <title>Structural basis for RNA recognition in roquin-mediated post-transcriptional gene regulation.</title>
        <authorList>
            <person name="Schlundt A."/>
            <person name="Heinz G.A."/>
            <person name="Janowski R."/>
            <person name="Geerlof A."/>
            <person name="Stehle R."/>
            <person name="Heissmeyer V."/>
            <person name="Niessing D."/>
            <person name="Sattler M."/>
        </authorList>
    </citation>
    <scope>X-RAY CRYSTALLOGRAPHY (1.94 ANGSTROMS) OF 147-326</scope>
    <scope>RNA-BINDING</scope>
    <scope>FUNCTION</scope>
    <scope>DOMAIN</scope>
    <scope>MUTAGENESIS OF ARG-188; ARG-219; LYS-220; ARG-229; ARG-233; SER-238; LYS-239; TYR-250; ARG-251; SER-253; LYS-259; ARG-260; SER-264; SER-265; GLU-293 AND LYS-314</scope>
</reference>
<reference key="21">
    <citation type="journal article" date="2015" name="Nat. Commun.">
        <title>Roquin binds microRNA-146a and Argonaute2 to regulate microRNA homeostasis.</title>
        <authorList>
            <person name="Srivastava M."/>
            <person name="Duan G."/>
            <person name="Kershaw N.J."/>
            <person name="Athanasopoulos V."/>
            <person name="Yeo J.H."/>
            <person name="Ose T."/>
            <person name="Hu D."/>
            <person name="Brown S.H."/>
            <person name="Jergic S."/>
            <person name="Patel H.R."/>
            <person name="Pratama A."/>
            <person name="Richards S."/>
            <person name="Verma A."/>
            <person name="Jones E.Y."/>
            <person name="Heissmeyer V."/>
            <person name="Preiss T."/>
            <person name="Dixon N.E."/>
            <person name="Chong M.M."/>
            <person name="Babon J.J."/>
            <person name="Vinuesa C.G."/>
        </authorList>
    </citation>
    <scope>X-RAY CRYSTALLOGRAPHY (2.75 ANGSTROMS) OF 1-484 OF MUTATED AT MET-199 IN COMPLEX WITH ZINC</scope>
    <scope>FUNCTION</scope>
    <scope>SANROQUE MOUSE</scope>
    <scope>MISCELLANEOUS</scope>
    <scope>MUTAGENESIS OF MET-199</scope>
    <scope>DOMAIN</scope>
    <scope>INTERACTION WITH AGO2</scope>
</reference>
<reference evidence="29 30" key="22">
    <citation type="journal article" date="2016" name="Nat. Commun.">
        <title>Roquin recognizes a non-canonical hexaloop structure in the 3'-UTR of Ox40.</title>
        <authorList>
            <person name="Janowski R."/>
            <person name="Heinz G.A."/>
            <person name="Schlundt A."/>
            <person name="Wommelsdorf N."/>
            <person name="Brenner S."/>
            <person name="Gruber A.R."/>
            <person name="Blank M."/>
            <person name="Buch T."/>
            <person name="Buhmann R."/>
            <person name="Zavolan M."/>
            <person name="Niessing D."/>
            <person name="Heissmeyer V."/>
            <person name="Sattler M."/>
        </authorList>
    </citation>
    <scope>X-RAY CRYSTALLOGRAPHY (2.23 ANGSTROMS) OF 147-326</scope>
    <scope>FUNCTION</scope>
    <scope>RNA-BINDING</scope>
    <scope>MUTAGENESIS OF MET-199; LYS-220; LYS-239; TYR-250; SER-253; LYS-259; ARG-260 AND SER-265</scope>
</reference>
<feature type="chain" id="PRO_0000055966" description="Roquin-1">
    <location>
        <begin position="1"/>
        <end position="1130"/>
    </location>
</feature>
<feature type="zinc finger region" description="RING-type; degenerate" evidence="2">
    <location>
        <begin position="14"/>
        <end position="54"/>
    </location>
</feature>
<feature type="zinc finger region" description="C3H1-type" evidence="3">
    <location>
        <begin position="413"/>
        <end position="441"/>
    </location>
</feature>
<feature type="region of interest" description="HEPN-N" evidence="15">
    <location>
        <begin position="128"/>
        <end position="176"/>
    </location>
</feature>
<feature type="region of interest" description="ROQ" evidence="13">
    <location>
        <begin position="177"/>
        <end position="326"/>
    </location>
</feature>
<feature type="region of interest" description="HEPN-C" evidence="15">
    <location>
        <begin position="327"/>
        <end position="399"/>
    </location>
</feature>
<feature type="region of interest" description="Disordered" evidence="4">
    <location>
        <begin position="493"/>
        <end position="567"/>
    </location>
</feature>
<feature type="region of interest" description="Disordered" evidence="4">
    <location>
        <begin position="722"/>
        <end position="750"/>
    </location>
</feature>
<feature type="region of interest" description="Disordered" evidence="4">
    <location>
        <begin position="1100"/>
        <end position="1130"/>
    </location>
</feature>
<feature type="compositionally biased region" description="Polar residues" evidence="4">
    <location>
        <begin position="497"/>
        <end position="506"/>
    </location>
</feature>
<feature type="compositionally biased region" description="Pro residues" evidence="4">
    <location>
        <begin position="553"/>
        <end position="567"/>
    </location>
</feature>
<feature type="compositionally biased region" description="Pro residues" evidence="4">
    <location>
        <begin position="732"/>
        <end position="746"/>
    </location>
</feature>
<feature type="compositionally biased region" description="Polar residues" evidence="4">
    <location>
        <begin position="1116"/>
        <end position="1130"/>
    </location>
</feature>
<feature type="binding site" evidence="15 28">
    <location>
        <position position="14"/>
    </location>
    <ligand>
        <name>Zn(2+)</name>
        <dbReference type="ChEBI" id="CHEBI:29105"/>
        <label>1</label>
    </ligand>
</feature>
<feature type="binding site" evidence="15 28">
    <location>
        <position position="17"/>
    </location>
    <ligand>
        <name>Zn(2+)</name>
        <dbReference type="ChEBI" id="CHEBI:29105"/>
        <label>1</label>
    </ligand>
</feature>
<feature type="binding site" evidence="15 28">
    <location>
        <position position="33"/>
    </location>
    <ligand>
        <name>Zn(2+)</name>
        <dbReference type="ChEBI" id="CHEBI:29105"/>
        <label>2</label>
    </ligand>
</feature>
<feature type="binding site" evidence="15 28">
    <location>
        <position position="35"/>
    </location>
    <ligand>
        <name>Zn(2+)</name>
        <dbReference type="ChEBI" id="CHEBI:29105"/>
        <label>2</label>
    </ligand>
</feature>
<feature type="binding site" evidence="15 28">
    <location>
        <position position="38"/>
    </location>
    <ligand>
        <name>Zn(2+)</name>
        <dbReference type="ChEBI" id="CHEBI:29105"/>
        <label>1</label>
    </ligand>
</feature>
<feature type="binding site" evidence="15 28">
    <location>
        <position position="50"/>
    </location>
    <ligand>
        <name>Zn(2+)</name>
        <dbReference type="ChEBI" id="CHEBI:29105"/>
        <label>2</label>
    </ligand>
</feature>
<feature type="binding site" evidence="15 28">
    <location>
        <position position="53"/>
    </location>
    <ligand>
        <name>Zn(2+)</name>
        <dbReference type="ChEBI" id="CHEBI:29105"/>
        <label>2</label>
    </ligand>
</feature>
<feature type="site" description="Cleavage; by MALT1" evidence="14">
    <location>
        <position position="510"/>
    </location>
</feature>
<feature type="site" description="Cleavage; by MALT1" evidence="14">
    <location>
        <position position="579"/>
    </location>
</feature>
<feature type="modified residue" description="Phosphoserine" evidence="1">
    <location>
        <position position="462"/>
    </location>
</feature>
<feature type="modified residue" description="Phosphoserine" evidence="32">
    <location>
        <position position="531"/>
    </location>
</feature>
<feature type="modified residue" description="Phosphoserine" evidence="32">
    <location>
        <position position="535"/>
    </location>
</feature>
<feature type="modified residue" description="Phosphoserine" evidence="1">
    <location>
        <position position="861"/>
    </location>
</feature>
<feature type="modified residue" description="Phosphoserine" evidence="31 32">
    <location>
        <position position="1107"/>
    </location>
</feature>
<feature type="modified residue" description="Phosphoserine" evidence="31 32">
    <location>
        <position position="1110"/>
    </location>
</feature>
<feature type="mutagenesis site" description="No effect on localization to stress granules." evidence="7">
    <original>C</original>
    <variation>A</variation>
    <location>
        <position position="14"/>
    </location>
</feature>
<feature type="mutagenesis site" description="No effect on CDE RNA-binding." evidence="13">
    <original>R</original>
    <variation>A</variation>
    <location>
        <position position="188"/>
    </location>
</feature>
<feature type="mutagenesis site" description="In sanroque; partial loss of ICOS regulation, no effect on localization to stress granules, no effect on RNA-binding." evidence="5 7 15 17 19">
    <original>M</original>
    <variation>R</variation>
    <location>
        <position position="199"/>
    </location>
</feature>
<feature type="mutagenesis site" description="No effect on CDE RNA-binding." evidence="13">
    <original>R</original>
    <variation>A</variation>
    <location>
        <position position="219"/>
    </location>
</feature>
<feature type="mutagenesis site" description="Strongly decreases CDE and ADE RNA-binding. Increases target-mRNA expression. Increases ICOS surface expression; when associated with A-239 and A-260." evidence="13 14 17">
    <original>K</original>
    <variation>A</variation>
    <location>
        <position position="220"/>
    </location>
</feature>
<feature type="mutagenesis site" description="No effect on CDE RNA-binding." evidence="13 17">
    <original>R</original>
    <variation>A</variation>
    <location>
        <position position="229"/>
    </location>
</feature>
<feature type="mutagenesis site" description="No effect on CDE RNA-binding." evidence="13">
    <original>R</original>
    <variation>A</variation>
    <location>
        <position position="233"/>
    </location>
</feature>
<feature type="mutagenesis site" description="Decreases CDE RNA-binding." evidence="13">
    <original>S</original>
    <variation>A</variation>
    <location>
        <position position="238"/>
    </location>
</feature>
<feature type="mutagenesis site" description="Strongly decreases CDE and ADE RNA-binding. Increases target-mRNA expression. Abolishes CDE RNA-binding and highly increases target-mRNA expression; when associated with A-260. Increases target-mRNA expression. Increases ICOS surface expression; when associated with A-220 and A-260." evidence="13 14 17">
    <original>K</original>
    <variation>A</variation>
    <location>
        <position position="239"/>
    </location>
</feature>
<feature type="mutagenesis site" description="Decreases CDE RNA-binding. Increases target-mRNA expression." evidence="13 17">
    <original>Y</original>
    <variation>A</variation>
    <location>
        <position position="250"/>
    </location>
</feature>
<feature type="mutagenesis site" description="No effect on CDE RNA-binding." evidence="13">
    <original>R</original>
    <variation>A</variation>
    <location>
        <position position="251"/>
    </location>
</feature>
<feature type="mutagenesis site" description="Slightly decreases CDE and ADE RNA-binding." evidence="13 17">
    <original>S</original>
    <variation>A</variation>
    <location>
        <position position="253"/>
    </location>
</feature>
<feature type="mutagenesis site" description="Strongly decreases CDE and ADE RNA-binding." evidence="13 17">
    <original>K</original>
    <variation>A</variation>
    <location>
        <position position="259"/>
    </location>
</feature>
<feature type="mutagenesis site" description="Strongly decreases CDE and ADE RNA-binding. Increases target-mRNA expression. Abolishes CDE RNA-binding and highly increases target-mRNA expression; when associated with A-239. Increases target-mRNA expression. Increases ICOS surface expression; when associated with A-220 and A-239." evidence="13 14 17">
    <original>R</original>
    <variation>A</variation>
    <location>
        <position position="260"/>
    </location>
</feature>
<feature type="mutagenesis site" description="Decreases CDE RNA-binding." evidence="13">
    <original>S</original>
    <variation>A</variation>
    <location>
        <position position="264"/>
    </location>
</feature>
<feature type="mutagenesis site" description="Decreases CDE and ADE RNA-binding." evidence="13 17">
    <original>S</original>
    <variation>Y</variation>
    <location>
        <position position="265"/>
    </location>
</feature>
<feature type="mutagenesis site" description="No effect on CDE RNA-binding." evidence="13">
    <original>E</original>
    <variation>A</variation>
    <location>
        <position position="293"/>
    </location>
</feature>
<feature type="mutagenesis site" description="No effect on CDE RNA-binding." evidence="13">
    <original>K</original>
    <variation>A</variation>
    <location>
        <position position="314"/>
    </location>
</feature>
<feature type="mutagenesis site" description="No effect on RNA-binding." evidence="12">
    <original>C</original>
    <variation>R</variation>
    <location>
        <position position="419"/>
    </location>
</feature>
<feature type="mutagenesis site" description="No effect on localization to stress granules, reduces RNA-binding.">
    <original>C</original>
    <variation>R</variation>
    <location>
        <position position="434"/>
    </location>
</feature>
<feature type="mutagenesis site" description="No effect on cleavage." evidence="14">
    <original>R</original>
    <variation>G</variation>
    <location>
        <position position="488"/>
    </location>
</feature>
<feature type="mutagenesis site" description="Abolishes the formation of a preferential cleavage product. Abolishes protein cleavage; when associated with G-579." evidence="14">
    <original>R</original>
    <variation>G</variation>
    <location>
        <position position="510"/>
    </location>
</feature>
<feature type="mutagenesis site" description="No effect on cleavage." evidence="14">
    <original>R</original>
    <variation>G</variation>
    <location>
        <position position="560"/>
    </location>
</feature>
<feature type="mutagenesis site" description="Abolishes the formation of an alternative cleavage product. Abolishes protein cleavage; when associated with G-510." evidence="14">
    <original>R</original>
    <variation>G</variation>
    <location>
        <position position="579"/>
    </location>
</feature>
<feature type="mutagenesis site" description="Failed to reduce poly(A) tailed ICOS mRNA. Failed to regulate the production of inflammatory cytokines." evidence="19">
    <location>
        <begin position="687"/>
        <end position="1130"/>
    </location>
</feature>
<feature type="turn" evidence="34">
    <location>
        <begin position="15"/>
        <end position="17"/>
    </location>
</feature>
<feature type="strand" evidence="34">
    <location>
        <begin position="23"/>
        <end position="26"/>
    </location>
</feature>
<feature type="strand" evidence="34">
    <location>
        <begin position="28"/>
        <end position="30"/>
    </location>
</feature>
<feature type="strand" evidence="34">
    <location>
        <begin position="36"/>
        <end position="38"/>
    </location>
</feature>
<feature type="helix" evidence="34">
    <location>
        <begin position="39"/>
        <end position="45"/>
    </location>
</feature>
<feature type="strand" evidence="34">
    <location>
        <begin position="47"/>
        <end position="49"/>
    </location>
</feature>
<feature type="turn" evidence="34">
    <location>
        <begin position="51"/>
        <end position="53"/>
    </location>
</feature>
<feature type="turn" evidence="34">
    <location>
        <begin position="60"/>
        <end position="63"/>
    </location>
</feature>
<feature type="helix" evidence="34">
    <location>
        <begin position="68"/>
        <end position="71"/>
    </location>
</feature>
<feature type="turn" evidence="34">
    <location>
        <begin position="72"/>
        <end position="74"/>
    </location>
</feature>
<feature type="helix" evidence="34">
    <location>
        <begin position="90"/>
        <end position="107"/>
    </location>
</feature>
<feature type="helix" evidence="34">
    <location>
        <begin position="108"/>
        <end position="110"/>
    </location>
</feature>
<feature type="helix" evidence="34">
    <location>
        <begin position="131"/>
        <end position="141"/>
    </location>
</feature>
<feature type="helix" evidence="34">
    <location>
        <begin position="148"/>
        <end position="170"/>
    </location>
</feature>
<feature type="helix" evidence="35">
    <location>
        <begin position="176"/>
        <end position="189"/>
    </location>
</feature>
<feature type="helix" evidence="35">
    <location>
        <begin position="197"/>
        <end position="211"/>
    </location>
</feature>
<feature type="strand" evidence="33">
    <location>
        <begin position="216"/>
        <end position="218"/>
    </location>
</feature>
<feature type="helix" evidence="35">
    <location>
        <begin position="219"/>
        <end position="230"/>
    </location>
</feature>
<feature type="turn" evidence="35">
    <location>
        <begin position="231"/>
        <end position="233"/>
    </location>
</feature>
<feature type="helix" evidence="35">
    <location>
        <begin position="239"/>
        <end position="251"/>
    </location>
</feature>
<feature type="strand" evidence="35">
    <location>
        <begin position="255"/>
        <end position="260"/>
    </location>
</feature>
<feature type="strand" evidence="35">
    <location>
        <begin position="263"/>
        <end position="269"/>
    </location>
</feature>
<feature type="helix" evidence="35">
    <location>
        <begin position="271"/>
        <end position="273"/>
    </location>
</feature>
<feature type="helix" evidence="35">
    <location>
        <begin position="276"/>
        <end position="293"/>
    </location>
</feature>
<feature type="helix" evidence="35">
    <location>
        <begin position="300"/>
        <end position="308"/>
    </location>
</feature>
<feature type="strand" evidence="35">
    <location>
        <begin position="309"/>
        <end position="313"/>
    </location>
</feature>
<feature type="helix" evidence="35">
    <location>
        <begin position="314"/>
        <end position="324"/>
    </location>
</feature>
<feature type="helix" evidence="34">
    <location>
        <begin position="329"/>
        <end position="343"/>
    </location>
</feature>
<feature type="helix" evidence="34">
    <location>
        <begin position="350"/>
        <end position="353"/>
    </location>
</feature>
<feature type="helix" evidence="34">
    <location>
        <begin position="354"/>
        <end position="361"/>
    </location>
</feature>
<feature type="helix" evidence="34">
    <location>
        <begin position="374"/>
        <end position="397"/>
    </location>
</feature>
<dbReference type="EC" id="2.3.2.27" evidence="1"/>
<dbReference type="EMBL" id="AY948287">
    <property type="protein sequence ID" value="AAY16368.1"/>
    <property type="molecule type" value="mRNA"/>
</dbReference>
<dbReference type="EMBL" id="AK173335">
    <property type="protein sequence ID" value="BAD32613.1"/>
    <property type="status" value="ALT_INIT"/>
    <property type="molecule type" value="mRNA"/>
</dbReference>
<dbReference type="EMBL" id="BC138663">
    <property type="protein sequence ID" value="AAI38664.1"/>
    <property type="molecule type" value="mRNA"/>
</dbReference>
<dbReference type="CCDS" id="CCDS15410.1"/>
<dbReference type="RefSeq" id="NP_001020123.1">
    <property type="nucleotide sequence ID" value="NM_001024952.2"/>
</dbReference>
<dbReference type="PDB" id="4QI0">
    <property type="method" value="X-ray"/>
    <property type="resolution" value="1.94 A"/>
    <property type="chains" value="A/B=147-326"/>
</dbReference>
<dbReference type="PDB" id="4QI2">
    <property type="method" value="X-ray"/>
    <property type="resolution" value="3.00 A"/>
    <property type="chains" value="A/B/C/D=147-326"/>
</dbReference>
<dbReference type="PDB" id="4TXA">
    <property type="method" value="X-ray"/>
    <property type="resolution" value="2.75 A"/>
    <property type="chains" value="A=1-484"/>
</dbReference>
<dbReference type="PDB" id="5F5F">
    <property type="method" value="X-ray"/>
    <property type="resolution" value="3.00 A"/>
    <property type="chains" value="A/C/E/G=171-360"/>
</dbReference>
<dbReference type="PDB" id="5F5H">
    <property type="method" value="X-ray"/>
    <property type="resolution" value="2.23 A"/>
    <property type="chains" value="A/B=147-326"/>
</dbReference>
<dbReference type="PDB" id="6TQA">
    <property type="method" value="X-ray"/>
    <property type="resolution" value="2.40 A"/>
    <property type="chains" value="A/B/C/D=147-326"/>
</dbReference>
<dbReference type="PDB" id="6TQB">
    <property type="method" value="X-ray"/>
    <property type="resolution" value="1.60 A"/>
    <property type="chains" value="A=147-326"/>
</dbReference>
<dbReference type="PDBsum" id="4QI0"/>
<dbReference type="PDBsum" id="4QI2"/>
<dbReference type="PDBsum" id="4TXA"/>
<dbReference type="PDBsum" id="5F5F"/>
<dbReference type="PDBsum" id="5F5H"/>
<dbReference type="PDBsum" id="6TQA"/>
<dbReference type="PDBsum" id="6TQB"/>
<dbReference type="BMRB" id="Q4VGL6"/>
<dbReference type="SASBDB" id="Q4VGL6"/>
<dbReference type="SMR" id="Q4VGL6"/>
<dbReference type="BioGRID" id="237867">
    <property type="interactions" value="7"/>
</dbReference>
<dbReference type="FunCoup" id="Q4VGL6">
    <property type="interactions" value="2032"/>
</dbReference>
<dbReference type="IntAct" id="Q4VGL6">
    <property type="interactions" value="54"/>
</dbReference>
<dbReference type="MINT" id="Q4VGL6"/>
<dbReference type="STRING" id="10090.ENSMUSP00000124871"/>
<dbReference type="GlyGen" id="Q4VGL6">
    <property type="glycosylation" value="1 site, 1 N-linked glycan (1 site)"/>
</dbReference>
<dbReference type="iPTMnet" id="Q4VGL6"/>
<dbReference type="PhosphoSitePlus" id="Q4VGL6"/>
<dbReference type="PaxDb" id="10090-ENSMUSP00000124871"/>
<dbReference type="ProteomicsDB" id="253186"/>
<dbReference type="Pumba" id="Q4VGL6"/>
<dbReference type="Antibodypedia" id="34400">
    <property type="antibodies" value="143 antibodies from 22 providers"/>
</dbReference>
<dbReference type="DNASU" id="381305"/>
<dbReference type="Ensembl" id="ENSMUST00000161609.8">
    <property type="protein sequence ID" value="ENSMUSP00000124871.2"/>
    <property type="gene ID" value="ENSMUSG00000040423.12"/>
</dbReference>
<dbReference type="GeneID" id="381305"/>
<dbReference type="KEGG" id="mmu:381305"/>
<dbReference type="UCSC" id="uc007del.2">
    <property type="organism name" value="mouse"/>
</dbReference>
<dbReference type="AGR" id="MGI:2685397"/>
<dbReference type="CTD" id="149041"/>
<dbReference type="MGI" id="MGI:2685397">
    <property type="gene designation" value="Rc3h1"/>
</dbReference>
<dbReference type="VEuPathDB" id="HostDB:ENSMUSG00000040423"/>
<dbReference type="eggNOG" id="KOG3161">
    <property type="taxonomic scope" value="Eukaryota"/>
</dbReference>
<dbReference type="GeneTree" id="ENSGT00940000157143"/>
<dbReference type="HOGENOM" id="CLU_004948_0_0_1"/>
<dbReference type="InParanoid" id="Q4VGL6"/>
<dbReference type="OMA" id="SKTMYQG"/>
<dbReference type="OrthoDB" id="10067217at2759"/>
<dbReference type="PhylomeDB" id="Q4VGL6"/>
<dbReference type="TreeFam" id="TF317698"/>
<dbReference type="UniPathway" id="UPA00143"/>
<dbReference type="BioGRID-ORCS" id="381305">
    <property type="hits" value="6 hits in 78 CRISPR screens"/>
</dbReference>
<dbReference type="ChiTaRS" id="Rc3h1">
    <property type="organism name" value="mouse"/>
</dbReference>
<dbReference type="EvolutionaryTrace" id="Q4VGL6"/>
<dbReference type="PRO" id="PR:Q4VGL6"/>
<dbReference type="Proteomes" id="UP000000589">
    <property type="component" value="Chromosome 1"/>
</dbReference>
<dbReference type="RNAct" id="Q4VGL6">
    <property type="molecule type" value="protein"/>
</dbReference>
<dbReference type="Bgee" id="ENSMUSG00000040423">
    <property type="expression patterns" value="Expressed in manus and 219 other cell types or tissues"/>
</dbReference>
<dbReference type="ExpressionAtlas" id="Q4VGL6">
    <property type="expression patterns" value="baseline and differential"/>
</dbReference>
<dbReference type="GO" id="GO:0005737">
    <property type="term" value="C:cytoplasm"/>
    <property type="evidence" value="ECO:0000314"/>
    <property type="project" value="MGI"/>
</dbReference>
<dbReference type="GO" id="GO:0010494">
    <property type="term" value="C:cytoplasmic stress granule"/>
    <property type="evidence" value="ECO:0000314"/>
    <property type="project" value="UniProtKB"/>
</dbReference>
<dbReference type="GO" id="GO:0000932">
    <property type="term" value="C:P-body"/>
    <property type="evidence" value="ECO:0000314"/>
    <property type="project" value="UniProtKB"/>
</dbReference>
<dbReference type="GO" id="GO:1905762">
    <property type="term" value="F:CCR4-NOT complex binding"/>
    <property type="evidence" value="ECO:0007669"/>
    <property type="project" value="Ensembl"/>
</dbReference>
<dbReference type="GO" id="GO:0003725">
    <property type="term" value="F:double-stranded RNA binding"/>
    <property type="evidence" value="ECO:0000250"/>
    <property type="project" value="UniProtKB"/>
</dbReference>
<dbReference type="GO" id="GO:0035198">
    <property type="term" value="F:miRNA binding"/>
    <property type="evidence" value="ECO:0000314"/>
    <property type="project" value="UniProtKB"/>
</dbReference>
<dbReference type="GO" id="GO:0003730">
    <property type="term" value="F:mRNA 3'-UTR binding"/>
    <property type="evidence" value="ECO:0000314"/>
    <property type="project" value="UniProtKB"/>
</dbReference>
<dbReference type="GO" id="GO:0003729">
    <property type="term" value="F:mRNA binding"/>
    <property type="evidence" value="ECO:0000314"/>
    <property type="project" value="MGI"/>
</dbReference>
<dbReference type="GO" id="GO:0035613">
    <property type="term" value="F:RNA stem-loop binding"/>
    <property type="evidence" value="ECO:0000314"/>
    <property type="project" value="UniProtKB"/>
</dbReference>
<dbReference type="GO" id="GO:0004842">
    <property type="term" value="F:ubiquitin-protein transferase activity"/>
    <property type="evidence" value="ECO:0000250"/>
    <property type="project" value="UniProtKB"/>
</dbReference>
<dbReference type="GO" id="GO:0008270">
    <property type="term" value="F:zinc ion binding"/>
    <property type="evidence" value="ECO:0000314"/>
    <property type="project" value="UniProtKB"/>
</dbReference>
<dbReference type="GO" id="GO:0061158">
    <property type="term" value="P:3'-UTR-mediated mRNA destabilization"/>
    <property type="evidence" value="ECO:0000314"/>
    <property type="project" value="UniProtKB"/>
</dbReference>
<dbReference type="GO" id="GO:0001782">
    <property type="term" value="P:B cell homeostasis"/>
    <property type="evidence" value="ECO:0000316"/>
    <property type="project" value="MGI"/>
</dbReference>
<dbReference type="GO" id="GO:0071347">
    <property type="term" value="P:cellular response to interleukin-1"/>
    <property type="evidence" value="ECO:0000304"/>
    <property type="project" value="UniProtKB"/>
</dbReference>
<dbReference type="GO" id="GO:0048535">
    <property type="term" value="P:lymph node development"/>
    <property type="evidence" value="ECO:0000316"/>
    <property type="project" value="MGI"/>
</dbReference>
<dbReference type="GO" id="GO:0046007">
    <property type="term" value="P:negative regulation of activated T cell proliferation"/>
    <property type="evidence" value="ECO:0000315"/>
    <property type="project" value="BHF-UCL"/>
</dbReference>
<dbReference type="GO" id="GO:0030889">
    <property type="term" value="P:negative regulation of B cell proliferation"/>
    <property type="evidence" value="ECO:0000315"/>
    <property type="project" value="BHF-UCL"/>
</dbReference>
<dbReference type="GO" id="GO:0002635">
    <property type="term" value="P:negative regulation of germinal center formation"/>
    <property type="evidence" value="ECO:0000315"/>
    <property type="project" value="BHF-UCL"/>
</dbReference>
<dbReference type="GO" id="GO:2000320">
    <property type="term" value="P:negative regulation of T-helper 17 cell differentiation"/>
    <property type="evidence" value="ECO:0000315"/>
    <property type="project" value="UniProtKB"/>
</dbReference>
<dbReference type="GO" id="GO:0045623">
    <property type="term" value="P:negative regulation of T-helper cell differentiation"/>
    <property type="evidence" value="ECO:0000315"/>
    <property type="project" value="MGI"/>
</dbReference>
<dbReference type="GO" id="GO:0000956">
    <property type="term" value="P:nuclear-transcribed mRNA catabolic process"/>
    <property type="evidence" value="ECO:0000315"/>
    <property type="project" value="BHF-UCL"/>
</dbReference>
<dbReference type="GO" id="GO:0000288">
    <property type="term" value="P:nuclear-transcribed mRNA catabolic process, deadenylation-dependent decay"/>
    <property type="evidence" value="ECO:0000315"/>
    <property type="project" value="UniProtKB"/>
</dbReference>
<dbReference type="GO" id="GO:0000184">
    <property type="term" value="P:nuclear-transcribed mRNA catabolic process, nonsense-mediated decay"/>
    <property type="evidence" value="ECO:0000304"/>
    <property type="project" value="UniProtKB"/>
</dbReference>
<dbReference type="GO" id="GO:0033962">
    <property type="term" value="P:P-body assembly"/>
    <property type="evidence" value="ECO:0000315"/>
    <property type="project" value="BHF-UCL"/>
</dbReference>
<dbReference type="GO" id="GO:0061014">
    <property type="term" value="P:positive regulation of mRNA catabolic process"/>
    <property type="evidence" value="ECO:0000314"/>
    <property type="project" value="UniProtKB"/>
</dbReference>
<dbReference type="GO" id="GO:1901224">
    <property type="term" value="P:positive regulation of non-canonical NF-kappaB signal transduction"/>
    <property type="evidence" value="ECO:0000314"/>
    <property type="project" value="MGI"/>
</dbReference>
<dbReference type="GO" id="GO:0010608">
    <property type="term" value="P:post-transcriptional regulation of gene expression"/>
    <property type="evidence" value="ECO:0000314"/>
    <property type="project" value="MGI"/>
</dbReference>
<dbReference type="GO" id="GO:0000209">
    <property type="term" value="P:protein polyubiquitination"/>
    <property type="evidence" value="ECO:0000250"/>
    <property type="project" value="UniProtKB"/>
</dbReference>
<dbReference type="GO" id="GO:0010468">
    <property type="term" value="P:regulation of gene expression"/>
    <property type="evidence" value="ECO:0000314"/>
    <property type="project" value="MGI"/>
</dbReference>
<dbReference type="GO" id="GO:0002634">
    <property type="term" value="P:regulation of germinal center formation"/>
    <property type="evidence" value="ECO:0000315"/>
    <property type="project" value="BHF-UCL"/>
</dbReference>
<dbReference type="GO" id="GO:2000628">
    <property type="term" value="P:regulation of miRNA metabolic process"/>
    <property type="evidence" value="ECO:0000315"/>
    <property type="project" value="UniProtKB"/>
</dbReference>
<dbReference type="GO" id="GO:0043488">
    <property type="term" value="P:regulation of mRNA stability"/>
    <property type="evidence" value="ECO:0000315"/>
    <property type="project" value="BHF-UCL"/>
</dbReference>
<dbReference type="GO" id="GO:1900151">
    <property type="term" value="P:regulation of nuclear-transcribed mRNA catabolic process, deadenylation-dependent decay"/>
    <property type="evidence" value="ECO:0007669"/>
    <property type="project" value="Ensembl"/>
</dbReference>
<dbReference type="GO" id="GO:0050856">
    <property type="term" value="P:regulation of T cell receptor signaling pathway"/>
    <property type="evidence" value="ECO:0000315"/>
    <property type="project" value="BHF-UCL"/>
</dbReference>
<dbReference type="GO" id="GO:0048536">
    <property type="term" value="P:spleen development"/>
    <property type="evidence" value="ECO:0000316"/>
    <property type="project" value="MGI"/>
</dbReference>
<dbReference type="GO" id="GO:0043029">
    <property type="term" value="P:T cell homeostasis"/>
    <property type="evidence" value="ECO:0000316"/>
    <property type="project" value="MGI"/>
</dbReference>
<dbReference type="GO" id="GO:0042098">
    <property type="term" value="P:T cell proliferation"/>
    <property type="evidence" value="ECO:0000316"/>
    <property type="project" value="MGI"/>
</dbReference>
<dbReference type="GO" id="GO:0050852">
    <property type="term" value="P:T cell receptor signaling pathway"/>
    <property type="evidence" value="ECO:0000315"/>
    <property type="project" value="UniProtKB"/>
</dbReference>
<dbReference type="GO" id="GO:0061470">
    <property type="term" value="P:T follicular helper cell differentiation"/>
    <property type="evidence" value="ECO:0000316"/>
    <property type="project" value="MGI"/>
</dbReference>
<dbReference type="CDD" id="cd16781">
    <property type="entry name" value="mRING-HC-C3HC3D_Roquin1"/>
    <property type="match status" value="1"/>
</dbReference>
<dbReference type="FunFam" id="1.20.120.1790:FF:000001">
    <property type="entry name" value="roquin-1 isoform X1"/>
    <property type="match status" value="1"/>
</dbReference>
<dbReference type="FunFam" id="4.10.1000.10:FF:000004">
    <property type="entry name" value="roquin-1 isoform X2"/>
    <property type="match status" value="1"/>
</dbReference>
<dbReference type="FunFam" id="3.30.40.10:FF:000047">
    <property type="entry name" value="Roquin-2 isoform 1"/>
    <property type="match status" value="1"/>
</dbReference>
<dbReference type="Gene3D" id="1.20.120.1790">
    <property type="match status" value="1"/>
</dbReference>
<dbReference type="Gene3D" id="4.10.1000.10">
    <property type="entry name" value="Zinc finger, CCCH-type"/>
    <property type="match status" value="1"/>
</dbReference>
<dbReference type="Gene3D" id="3.30.40.10">
    <property type="entry name" value="Zinc/RING finger domain, C3HC4 (zinc finger)"/>
    <property type="match status" value="1"/>
</dbReference>
<dbReference type="InterPro" id="IPR041523">
    <property type="entry name" value="ROQ_II"/>
</dbReference>
<dbReference type="InterPro" id="IPR048575">
    <property type="entry name" value="Roquin_1_2-like_ROQ"/>
</dbReference>
<dbReference type="InterPro" id="IPR052249">
    <property type="entry name" value="Roquin_domain"/>
</dbReference>
<dbReference type="InterPro" id="IPR000571">
    <property type="entry name" value="Znf_CCCH"/>
</dbReference>
<dbReference type="InterPro" id="IPR036855">
    <property type="entry name" value="Znf_CCCH_sf"/>
</dbReference>
<dbReference type="InterPro" id="IPR001841">
    <property type="entry name" value="Znf_RING"/>
</dbReference>
<dbReference type="InterPro" id="IPR013083">
    <property type="entry name" value="Znf_RING/FYVE/PHD"/>
</dbReference>
<dbReference type="InterPro" id="IPR017907">
    <property type="entry name" value="Znf_RING_CS"/>
</dbReference>
<dbReference type="PANTHER" id="PTHR13139">
    <property type="entry name" value="RING FINGER AND CCCH-TYPE ZINC FINGER DOMAIN-CONTAINING PROTEIN"/>
    <property type="match status" value="1"/>
</dbReference>
<dbReference type="PANTHER" id="PTHR13139:SF6">
    <property type="entry name" value="ROQUIN-1"/>
    <property type="match status" value="1"/>
</dbReference>
<dbReference type="Pfam" id="PF18386">
    <property type="entry name" value="ROQ_II"/>
    <property type="match status" value="1"/>
</dbReference>
<dbReference type="Pfam" id="PF21206">
    <property type="entry name" value="Roquin_1_2-like_ROQ"/>
    <property type="match status" value="1"/>
</dbReference>
<dbReference type="Pfam" id="PF14634">
    <property type="entry name" value="zf-RING_5"/>
    <property type="match status" value="1"/>
</dbReference>
<dbReference type="SMART" id="SM00184">
    <property type="entry name" value="RING"/>
    <property type="match status" value="1"/>
</dbReference>
<dbReference type="SMART" id="SM00356">
    <property type="entry name" value="ZnF_C3H1"/>
    <property type="match status" value="1"/>
</dbReference>
<dbReference type="SUPFAM" id="SSF90229">
    <property type="entry name" value="CCCH zinc finger"/>
    <property type="match status" value="1"/>
</dbReference>
<dbReference type="SUPFAM" id="SSF57850">
    <property type="entry name" value="RING/U-box"/>
    <property type="match status" value="1"/>
</dbReference>
<dbReference type="PROSITE" id="PS50103">
    <property type="entry name" value="ZF_C3H1"/>
    <property type="match status" value="1"/>
</dbReference>
<dbReference type="PROSITE" id="PS00518">
    <property type="entry name" value="ZF_RING_1"/>
    <property type="match status" value="1"/>
</dbReference>
<dbReference type="PROSITE" id="PS50089">
    <property type="entry name" value="ZF_RING_2"/>
    <property type="match status" value="1"/>
</dbReference>
<proteinExistence type="evidence at protein level"/>
<keyword id="KW-0002">3D-structure</keyword>
<keyword id="KW-0963">Cytoplasm</keyword>
<keyword id="KW-0479">Metal-binding</keyword>
<keyword id="KW-0597">Phosphoprotein</keyword>
<keyword id="KW-1185">Reference proteome</keyword>
<keyword id="KW-0677">Repeat</keyword>
<keyword id="KW-0678">Repressor</keyword>
<keyword id="KW-0694">RNA-binding</keyword>
<keyword id="KW-0808">Transferase</keyword>
<keyword id="KW-0862">Zinc</keyword>
<keyword id="KW-0863">Zinc-finger</keyword>